<name>PLSX_HERAR</name>
<feature type="chain" id="PRO_1000001770" description="Phosphate acyltransferase">
    <location>
        <begin position="1"/>
        <end position="357"/>
    </location>
</feature>
<keyword id="KW-0963">Cytoplasm</keyword>
<keyword id="KW-0444">Lipid biosynthesis</keyword>
<keyword id="KW-0443">Lipid metabolism</keyword>
<keyword id="KW-0594">Phospholipid biosynthesis</keyword>
<keyword id="KW-1208">Phospholipid metabolism</keyword>
<keyword id="KW-1185">Reference proteome</keyword>
<keyword id="KW-0808">Transferase</keyword>
<proteinExistence type="inferred from homology"/>
<evidence type="ECO:0000255" key="1">
    <source>
        <dbReference type="HAMAP-Rule" id="MF_00019"/>
    </source>
</evidence>
<sequence>MTIKISIDCMGGDHGPAVTIPAAISFVESEPDAELILVGLADQLWAELKKHKAGEHPRLSVVNATEVVTMDDTLEAALRRKKNSSMRVAINLVKQGQADACVSAGNTGALMAISRYVLKTLPGVDRPAICSILPNQKDGPTYMLDLGANVDCEPQHLHQFALMGSALVSAMEGKPRPTVGLLNVGEEDIKGNDIVKQTAVLLRADHERGTLNFYGNVEGNDIFKGTTDIVVCDGFVGNVTLKASEGLGRFVKSVLTTEFKRNPLTMLGALIARSALKAISQRLNPSRYNGGSLLGLRGLVFKSHGGADAYGYQWAIKRAFDAAKYDVLARISTKIADLMPQSALTPLPEDSVTATEQ</sequence>
<gene>
    <name evidence="1" type="primary">plsX</name>
    <name type="ordered locus">HEAR2078</name>
</gene>
<organism>
    <name type="scientific">Herminiimonas arsenicoxydans</name>
    <dbReference type="NCBI Taxonomy" id="204773"/>
    <lineage>
        <taxon>Bacteria</taxon>
        <taxon>Pseudomonadati</taxon>
        <taxon>Pseudomonadota</taxon>
        <taxon>Betaproteobacteria</taxon>
        <taxon>Burkholderiales</taxon>
        <taxon>Oxalobacteraceae</taxon>
        <taxon>Herminiimonas</taxon>
    </lineage>
</organism>
<comment type="function">
    <text evidence="1">Catalyzes the reversible formation of acyl-phosphate (acyl-PO(4)) from acyl-[acyl-carrier-protein] (acyl-ACP). This enzyme utilizes acyl-ACP as fatty acyl donor, but not acyl-CoA.</text>
</comment>
<comment type="catalytic activity">
    <reaction evidence="1">
        <text>a fatty acyl-[ACP] + phosphate = an acyl phosphate + holo-[ACP]</text>
        <dbReference type="Rhea" id="RHEA:42292"/>
        <dbReference type="Rhea" id="RHEA-COMP:9685"/>
        <dbReference type="Rhea" id="RHEA-COMP:14125"/>
        <dbReference type="ChEBI" id="CHEBI:43474"/>
        <dbReference type="ChEBI" id="CHEBI:59918"/>
        <dbReference type="ChEBI" id="CHEBI:64479"/>
        <dbReference type="ChEBI" id="CHEBI:138651"/>
        <dbReference type="EC" id="2.3.1.274"/>
    </reaction>
</comment>
<comment type="pathway">
    <text evidence="1">Lipid metabolism; phospholipid metabolism.</text>
</comment>
<comment type="subunit">
    <text evidence="1">Homodimer. Probably interacts with PlsY.</text>
</comment>
<comment type="subcellular location">
    <subcellularLocation>
        <location evidence="1">Cytoplasm</location>
    </subcellularLocation>
    <text evidence="1">Associated with the membrane possibly through PlsY.</text>
</comment>
<comment type="similarity">
    <text evidence="1">Belongs to the PlsX family.</text>
</comment>
<protein>
    <recommendedName>
        <fullName evidence="1">Phosphate acyltransferase</fullName>
        <ecNumber evidence="1">2.3.1.274</ecNumber>
    </recommendedName>
    <alternativeName>
        <fullName evidence="1">Acyl-ACP phosphotransacylase</fullName>
    </alternativeName>
    <alternativeName>
        <fullName evidence="1">Acyl-[acyl-carrier-protein]--phosphate acyltransferase</fullName>
    </alternativeName>
    <alternativeName>
        <fullName evidence="1">Phosphate-acyl-ACP acyltransferase</fullName>
    </alternativeName>
</protein>
<accession>A4G6T3</accession>
<reference key="1">
    <citation type="journal article" date="2007" name="PLoS Genet.">
        <title>A tale of two oxidation states: bacterial colonization of arsenic-rich environments.</title>
        <authorList>
            <person name="Muller D."/>
            <person name="Medigue C."/>
            <person name="Koechler S."/>
            <person name="Barbe V."/>
            <person name="Barakat M."/>
            <person name="Talla E."/>
            <person name="Bonnefoy V."/>
            <person name="Krin E."/>
            <person name="Arsene-Ploetze F."/>
            <person name="Carapito C."/>
            <person name="Chandler M."/>
            <person name="Cournoyer B."/>
            <person name="Cruveiller S."/>
            <person name="Dossat C."/>
            <person name="Duval S."/>
            <person name="Heymann M."/>
            <person name="Leize E."/>
            <person name="Lieutaud A."/>
            <person name="Lievremont D."/>
            <person name="Makita Y."/>
            <person name="Mangenot S."/>
            <person name="Nitschke W."/>
            <person name="Ortet P."/>
            <person name="Perdrial N."/>
            <person name="Schoepp B."/>
            <person name="Siguier P."/>
            <person name="Simeonova D.D."/>
            <person name="Rouy Z."/>
            <person name="Segurens B."/>
            <person name="Turlin E."/>
            <person name="Vallenet D."/>
            <person name="van Dorsselaer A."/>
            <person name="Weiss S."/>
            <person name="Weissenbach J."/>
            <person name="Lett M.-C."/>
            <person name="Danchin A."/>
            <person name="Bertin P.N."/>
        </authorList>
    </citation>
    <scope>NUCLEOTIDE SEQUENCE [LARGE SCALE GENOMIC DNA]</scope>
    <source>
        <strain>ULPAs1</strain>
    </source>
</reference>
<dbReference type="EC" id="2.3.1.274" evidence="1"/>
<dbReference type="EMBL" id="CU207211">
    <property type="protein sequence ID" value="CAL62220.1"/>
    <property type="molecule type" value="Genomic_DNA"/>
</dbReference>
<dbReference type="SMR" id="A4G6T3"/>
<dbReference type="STRING" id="204773.HEAR2078"/>
<dbReference type="KEGG" id="har:HEAR2078"/>
<dbReference type="eggNOG" id="COG0416">
    <property type="taxonomic scope" value="Bacteria"/>
</dbReference>
<dbReference type="HOGENOM" id="CLU_039379_1_0_4"/>
<dbReference type="OrthoDB" id="9806408at2"/>
<dbReference type="UniPathway" id="UPA00085"/>
<dbReference type="Proteomes" id="UP000006697">
    <property type="component" value="Chromosome"/>
</dbReference>
<dbReference type="GO" id="GO:0005737">
    <property type="term" value="C:cytoplasm"/>
    <property type="evidence" value="ECO:0007669"/>
    <property type="project" value="UniProtKB-SubCell"/>
</dbReference>
<dbReference type="GO" id="GO:0043811">
    <property type="term" value="F:phosphate:acyl-[acyl carrier protein] acyltransferase activity"/>
    <property type="evidence" value="ECO:0007669"/>
    <property type="project" value="UniProtKB-UniRule"/>
</dbReference>
<dbReference type="GO" id="GO:0006633">
    <property type="term" value="P:fatty acid biosynthetic process"/>
    <property type="evidence" value="ECO:0007669"/>
    <property type="project" value="UniProtKB-UniRule"/>
</dbReference>
<dbReference type="GO" id="GO:0008654">
    <property type="term" value="P:phospholipid biosynthetic process"/>
    <property type="evidence" value="ECO:0007669"/>
    <property type="project" value="UniProtKB-KW"/>
</dbReference>
<dbReference type="Gene3D" id="3.40.718.10">
    <property type="entry name" value="Isopropylmalate Dehydrogenase"/>
    <property type="match status" value="1"/>
</dbReference>
<dbReference type="HAMAP" id="MF_00019">
    <property type="entry name" value="PlsX"/>
    <property type="match status" value="1"/>
</dbReference>
<dbReference type="InterPro" id="IPR003664">
    <property type="entry name" value="FA_synthesis"/>
</dbReference>
<dbReference type="InterPro" id="IPR012281">
    <property type="entry name" value="Phospholipid_synth_PlsX-like"/>
</dbReference>
<dbReference type="NCBIfam" id="TIGR00182">
    <property type="entry name" value="plsX"/>
    <property type="match status" value="1"/>
</dbReference>
<dbReference type="PANTHER" id="PTHR30100">
    <property type="entry name" value="FATTY ACID/PHOSPHOLIPID SYNTHESIS PROTEIN PLSX"/>
    <property type="match status" value="1"/>
</dbReference>
<dbReference type="PANTHER" id="PTHR30100:SF1">
    <property type="entry name" value="PHOSPHATE ACYLTRANSFERASE"/>
    <property type="match status" value="1"/>
</dbReference>
<dbReference type="Pfam" id="PF02504">
    <property type="entry name" value="FA_synthesis"/>
    <property type="match status" value="1"/>
</dbReference>
<dbReference type="PIRSF" id="PIRSF002465">
    <property type="entry name" value="Phsphlp_syn_PlsX"/>
    <property type="match status" value="1"/>
</dbReference>
<dbReference type="SUPFAM" id="SSF53659">
    <property type="entry name" value="Isocitrate/Isopropylmalate dehydrogenase-like"/>
    <property type="match status" value="1"/>
</dbReference>